<comment type="cofactor">
    <cofactor evidence="1">
        <name>Zn(2+)</name>
        <dbReference type="ChEBI" id="CHEBI:29105"/>
    </cofactor>
    <text evidence="1">Binds 1 zinc ion per subunit.</text>
</comment>
<comment type="subcellular location">
    <subcellularLocation>
        <location evidence="3">Cytoplasm</location>
    </subcellularLocation>
</comment>
<comment type="similarity">
    <text evidence="3">Belongs to the peptidase M1 family.</text>
</comment>
<keyword id="KW-0031">Aminopeptidase</keyword>
<keyword id="KW-0963">Cytoplasm</keyword>
<keyword id="KW-0378">Hydrolase</keyword>
<keyword id="KW-0479">Metal-binding</keyword>
<keyword id="KW-0482">Metalloprotease</keyword>
<keyword id="KW-0645">Protease</keyword>
<keyword id="KW-1185">Reference proteome</keyword>
<keyword id="KW-0862">Zinc</keyword>
<accession>Q96ZT9</accession>
<dbReference type="EC" id="3.4.11.-"/>
<dbReference type="EMBL" id="BA000023">
    <property type="protein sequence ID" value="BAB66834.1"/>
    <property type="molecule type" value="Genomic_DNA"/>
</dbReference>
<dbReference type="RefSeq" id="WP_010979812.1">
    <property type="nucleotide sequence ID" value="NC_003106.2"/>
</dbReference>
<dbReference type="SMR" id="Q96ZT9"/>
<dbReference type="STRING" id="273063.STK_17460"/>
<dbReference type="MEROPS" id="M01.020"/>
<dbReference type="GeneID" id="1459799"/>
<dbReference type="KEGG" id="sto:STK_17460"/>
<dbReference type="PATRIC" id="fig|273063.9.peg.1992"/>
<dbReference type="eggNOG" id="arCOG02969">
    <property type="taxonomic scope" value="Archaea"/>
</dbReference>
<dbReference type="OrthoDB" id="139771at2157"/>
<dbReference type="Proteomes" id="UP000001015">
    <property type="component" value="Chromosome"/>
</dbReference>
<dbReference type="GO" id="GO:0005737">
    <property type="term" value="C:cytoplasm"/>
    <property type="evidence" value="ECO:0007669"/>
    <property type="project" value="UniProtKB-SubCell"/>
</dbReference>
<dbReference type="GO" id="GO:0005615">
    <property type="term" value="C:extracellular space"/>
    <property type="evidence" value="ECO:0007669"/>
    <property type="project" value="TreeGrafter"/>
</dbReference>
<dbReference type="GO" id="GO:0016020">
    <property type="term" value="C:membrane"/>
    <property type="evidence" value="ECO:0007669"/>
    <property type="project" value="TreeGrafter"/>
</dbReference>
<dbReference type="GO" id="GO:0070006">
    <property type="term" value="F:metalloaminopeptidase activity"/>
    <property type="evidence" value="ECO:0007669"/>
    <property type="project" value="TreeGrafter"/>
</dbReference>
<dbReference type="GO" id="GO:0042277">
    <property type="term" value="F:peptide binding"/>
    <property type="evidence" value="ECO:0007669"/>
    <property type="project" value="TreeGrafter"/>
</dbReference>
<dbReference type="GO" id="GO:0008270">
    <property type="term" value="F:zinc ion binding"/>
    <property type="evidence" value="ECO:0007669"/>
    <property type="project" value="InterPro"/>
</dbReference>
<dbReference type="GO" id="GO:0043171">
    <property type="term" value="P:peptide catabolic process"/>
    <property type="evidence" value="ECO:0007669"/>
    <property type="project" value="TreeGrafter"/>
</dbReference>
<dbReference type="GO" id="GO:0006508">
    <property type="term" value="P:proteolysis"/>
    <property type="evidence" value="ECO:0007669"/>
    <property type="project" value="UniProtKB-KW"/>
</dbReference>
<dbReference type="CDD" id="cd09601">
    <property type="entry name" value="M1_APN-Q_like"/>
    <property type="match status" value="1"/>
</dbReference>
<dbReference type="FunFam" id="1.10.390.10:FF:000006">
    <property type="entry name" value="Puromycin-sensitive aminopeptidase"/>
    <property type="match status" value="1"/>
</dbReference>
<dbReference type="Gene3D" id="1.25.50.20">
    <property type="match status" value="1"/>
</dbReference>
<dbReference type="Gene3D" id="2.60.40.1910">
    <property type="match status" value="1"/>
</dbReference>
<dbReference type="Gene3D" id="1.10.390.10">
    <property type="entry name" value="Neutral Protease Domain 2"/>
    <property type="match status" value="1"/>
</dbReference>
<dbReference type="Gene3D" id="2.60.40.1730">
    <property type="entry name" value="tricorn interacting facor f3 domain"/>
    <property type="match status" value="1"/>
</dbReference>
<dbReference type="InterPro" id="IPR045357">
    <property type="entry name" value="Aminopeptidase_N-like_N"/>
</dbReference>
<dbReference type="InterPro" id="IPR042097">
    <property type="entry name" value="Aminopeptidase_N-like_N_sf"/>
</dbReference>
<dbReference type="InterPro" id="IPR024571">
    <property type="entry name" value="ERAP1-like_C_dom"/>
</dbReference>
<dbReference type="InterPro" id="IPR034016">
    <property type="entry name" value="M1_APN-typ"/>
</dbReference>
<dbReference type="InterPro" id="IPR001930">
    <property type="entry name" value="Peptidase_M1"/>
</dbReference>
<dbReference type="InterPro" id="IPR050344">
    <property type="entry name" value="Peptidase_M1_aminopeptidases"/>
</dbReference>
<dbReference type="InterPro" id="IPR014782">
    <property type="entry name" value="Peptidase_M1_dom"/>
</dbReference>
<dbReference type="InterPro" id="IPR027268">
    <property type="entry name" value="Peptidase_M4/M1_CTD_sf"/>
</dbReference>
<dbReference type="PANTHER" id="PTHR11533">
    <property type="entry name" value="PROTEASE M1 ZINC METALLOPROTEASE"/>
    <property type="match status" value="1"/>
</dbReference>
<dbReference type="PANTHER" id="PTHR11533:SF174">
    <property type="entry name" value="PUROMYCIN-SENSITIVE AMINOPEPTIDASE-RELATED"/>
    <property type="match status" value="1"/>
</dbReference>
<dbReference type="Pfam" id="PF11838">
    <property type="entry name" value="ERAP1_C"/>
    <property type="match status" value="1"/>
</dbReference>
<dbReference type="Pfam" id="PF01433">
    <property type="entry name" value="Peptidase_M1"/>
    <property type="match status" value="1"/>
</dbReference>
<dbReference type="Pfam" id="PF17900">
    <property type="entry name" value="Peptidase_M1_N"/>
    <property type="match status" value="1"/>
</dbReference>
<dbReference type="PRINTS" id="PR00756">
    <property type="entry name" value="ALADIPTASE"/>
</dbReference>
<dbReference type="SUPFAM" id="SSF63737">
    <property type="entry name" value="Leukotriene A4 hydrolase N-terminal domain"/>
    <property type="match status" value="1"/>
</dbReference>
<dbReference type="SUPFAM" id="SSF55486">
    <property type="entry name" value="Metalloproteases ('zincins'), catalytic domain"/>
    <property type="match status" value="1"/>
</dbReference>
<dbReference type="PROSITE" id="PS00142">
    <property type="entry name" value="ZINC_PROTEASE"/>
    <property type="match status" value="1"/>
</dbReference>
<sequence>MVNVERYEIFLDFNEYSYEGMEKIKMKSDGEKVELDSVGLEIKEVKADGKQVKYETKNEKLIVYSKVNEELEIRFSGKADNKSILGIYVAPYDGNYLITTQFEPIYARKFIPCFDSPDMKAVFKLSVRVNRGQKVISNMPIISIRDDGEKIVYEFDETPRMSTYLLYLGIGDFEEISDESKKPKIILATTPGKSKRGIFAIEVARKVIDYYEKYFEIPYQLPKLHLIEIPEFAAGAMENWGAITFRESALLADESSSVSQKLSVSAVIAHELAHQWFGDMVTLKWWDDLWLNESFATFMAYKSLKEIFPQWESEGHFIYDETLSALTEDSLLNTHPIETHVKDPHEIEEMFDNISYGKGASILRMIEAYVGEEVFRRGVVNYLNKFKFSNASGSDLWNSISEAYGSDISQIMAEWITKPGYPVITVNVEGDSVEFFQRRFTLLNVNDSTIYKVPLTFEVNGKRQTLLLDKESVKLNFDNAVSSIKVNLNRTGFYRVLYKPFELSFSSTLNSYEELGLVNDYWNFLLAGLESIKTYLTLIKRFSNTRNSFLSREIAFELMTLYYINKDKYYSIARDFLLNQIKIYRNAKDDLGKMAYSSIIRSLAIVDDDFALGLSNLFQYYEQLDSNIKGAVAIAYAISTSDFNGLLDKYKSFNSDEEKLRMIDAITNIRDKSIVEKLAMLVFNRTIKYQEAPHVINSLSNNPYVREELCNFLQGNFDMIKQFVVTVAGMWGLFYIIRGPMIMCGVNKPEETIEFLDRIKTKEIARSVEITKEYIKVYNRVKNLDL</sequence>
<organism>
    <name type="scientific">Sulfurisphaera tokodaii (strain DSM 16993 / JCM 10545 / NBRC 100140 / 7)</name>
    <name type="common">Sulfolobus tokodaii</name>
    <dbReference type="NCBI Taxonomy" id="273063"/>
    <lineage>
        <taxon>Archaea</taxon>
        <taxon>Thermoproteota</taxon>
        <taxon>Thermoprotei</taxon>
        <taxon>Sulfolobales</taxon>
        <taxon>Sulfolobaceae</taxon>
        <taxon>Sulfurisphaera</taxon>
    </lineage>
</organism>
<evidence type="ECO:0000250" key="1"/>
<evidence type="ECO:0000255" key="2">
    <source>
        <dbReference type="PROSITE-ProRule" id="PRU10095"/>
    </source>
</evidence>
<evidence type="ECO:0000305" key="3"/>
<proteinExistence type="inferred from homology"/>
<gene>
    <name type="primary">ape1</name>
    <name type="ordered locus">STK_17460</name>
</gene>
<protein>
    <recommendedName>
        <fullName>Probable aminopeptidase 1</fullName>
        <ecNumber>3.4.11.-</ecNumber>
    </recommendedName>
</protein>
<reference key="1">
    <citation type="journal article" date="2001" name="DNA Res.">
        <title>Complete genome sequence of an aerobic thermoacidophilic Crenarchaeon, Sulfolobus tokodaii strain7.</title>
        <authorList>
            <person name="Kawarabayasi Y."/>
            <person name="Hino Y."/>
            <person name="Horikawa H."/>
            <person name="Jin-no K."/>
            <person name="Takahashi M."/>
            <person name="Sekine M."/>
            <person name="Baba S."/>
            <person name="Ankai A."/>
            <person name="Kosugi H."/>
            <person name="Hosoyama A."/>
            <person name="Fukui S."/>
            <person name="Nagai Y."/>
            <person name="Nishijima K."/>
            <person name="Otsuka R."/>
            <person name="Nakazawa H."/>
            <person name="Takamiya M."/>
            <person name="Kato Y."/>
            <person name="Yoshizawa T."/>
            <person name="Tanaka T."/>
            <person name="Kudoh Y."/>
            <person name="Yamazaki J."/>
            <person name="Kushida N."/>
            <person name="Oguchi A."/>
            <person name="Aoki K."/>
            <person name="Masuda S."/>
            <person name="Yanagii M."/>
            <person name="Nishimura M."/>
            <person name="Yamagishi A."/>
            <person name="Oshima T."/>
            <person name="Kikuchi H."/>
        </authorList>
    </citation>
    <scope>NUCLEOTIDE SEQUENCE [LARGE SCALE GENOMIC DNA]</scope>
    <source>
        <strain>DSM 16993 / JCM 10545 / NBRC 100140 / 7</strain>
    </source>
</reference>
<name>APE1_SULTO</name>
<feature type="chain" id="PRO_0000095108" description="Probable aminopeptidase 1">
    <location>
        <begin position="1"/>
        <end position="786"/>
    </location>
</feature>
<feature type="active site" description="Proton acceptor" evidence="2">
    <location>
        <position position="271"/>
    </location>
</feature>
<feature type="binding site" evidence="1">
    <location>
        <position position="103"/>
    </location>
    <ligand>
        <name>substrate</name>
    </ligand>
</feature>
<feature type="binding site" evidence="1">
    <location>
        <begin position="235"/>
        <end position="239"/>
    </location>
    <ligand>
        <name>substrate</name>
    </ligand>
</feature>
<feature type="binding site" evidence="2">
    <location>
        <position position="270"/>
    </location>
    <ligand>
        <name>Zn(2+)</name>
        <dbReference type="ChEBI" id="CHEBI:29105"/>
        <note>catalytic</note>
    </ligand>
</feature>
<feature type="binding site" evidence="2">
    <location>
        <position position="274"/>
    </location>
    <ligand>
        <name>Zn(2+)</name>
        <dbReference type="ChEBI" id="CHEBI:29105"/>
        <note>catalytic</note>
    </ligand>
</feature>
<feature type="binding site" evidence="2">
    <location>
        <position position="293"/>
    </location>
    <ligand>
        <name>Zn(2+)</name>
        <dbReference type="ChEBI" id="CHEBI:29105"/>
        <note>catalytic</note>
    </ligand>
</feature>
<feature type="site" description="Transition state stabilizer" evidence="1">
    <location>
        <position position="356"/>
    </location>
</feature>